<keyword id="KW-0067">ATP-binding</keyword>
<keyword id="KW-0418">Kinase</keyword>
<keyword id="KW-0441">Lipid A biosynthesis</keyword>
<keyword id="KW-0444">Lipid biosynthesis</keyword>
<keyword id="KW-0443">Lipid metabolism</keyword>
<keyword id="KW-0547">Nucleotide-binding</keyword>
<keyword id="KW-0808">Transferase</keyword>
<accession>B4UHQ4</accession>
<name>LPXK_ANASK</name>
<evidence type="ECO:0000255" key="1">
    <source>
        <dbReference type="HAMAP-Rule" id="MF_00409"/>
    </source>
</evidence>
<dbReference type="EC" id="2.7.1.130" evidence="1"/>
<dbReference type="EMBL" id="CP001131">
    <property type="protein sequence ID" value="ACG73924.1"/>
    <property type="molecule type" value="Genomic_DNA"/>
</dbReference>
<dbReference type="RefSeq" id="WP_012526704.1">
    <property type="nucleotide sequence ID" value="NC_011145.1"/>
</dbReference>
<dbReference type="SMR" id="B4UHQ4"/>
<dbReference type="KEGG" id="ank:AnaeK_2699"/>
<dbReference type="HOGENOM" id="CLU_038816_6_0_7"/>
<dbReference type="OrthoDB" id="9766423at2"/>
<dbReference type="UniPathway" id="UPA00359">
    <property type="reaction ID" value="UER00482"/>
</dbReference>
<dbReference type="Proteomes" id="UP000001871">
    <property type="component" value="Chromosome"/>
</dbReference>
<dbReference type="GO" id="GO:0005886">
    <property type="term" value="C:plasma membrane"/>
    <property type="evidence" value="ECO:0007669"/>
    <property type="project" value="TreeGrafter"/>
</dbReference>
<dbReference type="GO" id="GO:0005524">
    <property type="term" value="F:ATP binding"/>
    <property type="evidence" value="ECO:0007669"/>
    <property type="project" value="UniProtKB-UniRule"/>
</dbReference>
<dbReference type="GO" id="GO:0009029">
    <property type="term" value="F:tetraacyldisaccharide 4'-kinase activity"/>
    <property type="evidence" value="ECO:0007669"/>
    <property type="project" value="UniProtKB-UniRule"/>
</dbReference>
<dbReference type="GO" id="GO:0009245">
    <property type="term" value="P:lipid A biosynthetic process"/>
    <property type="evidence" value="ECO:0007669"/>
    <property type="project" value="UniProtKB-UniRule"/>
</dbReference>
<dbReference type="GO" id="GO:0009244">
    <property type="term" value="P:lipopolysaccharide core region biosynthetic process"/>
    <property type="evidence" value="ECO:0007669"/>
    <property type="project" value="TreeGrafter"/>
</dbReference>
<dbReference type="Gene3D" id="3.40.50.300">
    <property type="entry name" value="P-loop containing nucleotide triphosphate hydrolases"/>
    <property type="match status" value="1"/>
</dbReference>
<dbReference type="HAMAP" id="MF_00409">
    <property type="entry name" value="LpxK"/>
    <property type="match status" value="1"/>
</dbReference>
<dbReference type="InterPro" id="IPR003758">
    <property type="entry name" value="LpxK"/>
</dbReference>
<dbReference type="InterPro" id="IPR027417">
    <property type="entry name" value="P-loop_NTPase"/>
</dbReference>
<dbReference type="NCBIfam" id="TIGR00682">
    <property type="entry name" value="lpxK"/>
    <property type="match status" value="1"/>
</dbReference>
<dbReference type="PANTHER" id="PTHR42724">
    <property type="entry name" value="TETRAACYLDISACCHARIDE 4'-KINASE"/>
    <property type="match status" value="1"/>
</dbReference>
<dbReference type="PANTHER" id="PTHR42724:SF1">
    <property type="entry name" value="TETRAACYLDISACCHARIDE 4'-KINASE, MITOCHONDRIAL-RELATED"/>
    <property type="match status" value="1"/>
</dbReference>
<dbReference type="Pfam" id="PF02606">
    <property type="entry name" value="LpxK"/>
    <property type="match status" value="1"/>
</dbReference>
<dbReference type="SUPFAM" id="SSF52540">
    <property type="entry name" value="P-loop containing nucleoside triphosphate hydrolases"/>
    <property type="match status" value="1"/>
</dbReference>
<reference key="1">
    <citation type="submission" date="2008-08" db="EMBL/GenBank/DDBJ databases">
        <title>Complete sequence of Anaeromyxobacter sp. K.</title>
        <authorList>
            <consortium name="US DOE Joint Genome Institute"/>
            <person name="Lucas S."/>
            <person name="Copeland A."/>
            <person name="Lapidus A."/>
            <person name="Glavina del Rio T."/>
            <person name="Dalin E."/>
            <person name="Tice H."/>
            <person name="Bruce D."/>
            <person name="Goodwin L."/>
            <person name="Pitluck S."/>
            <person name="Saunders E."/>
            <person name="Brettin T."/>
            <person name="Detter J.C."/>
            <person name="Han C."/>
            <person name="Larimer F."/>
            <person name="Land M."/>
            <person name="Hauser L."/>
            <person name="Kyrpides N."/>
            <person name="Ovchinnikiva G."/>
            <person name="Beliaev A."/>
        </authorList>
    </citation>
    <scope>NUCLEOTIDE SEQUENCE [LARGE SCALE GENOMIC DNA]</scope>
    <source>
        <strain>K</strain>
    </source>
</reference>
<feature type="chain" id="PRO_1000191520" description="Tetraacyldisaccharide 4'-kinase">
    <location>
        <begin position="1"/>
        <end position="378"/>
    </location>
</feature>
<feature type="binding site" evidence="1">
    <location>
        <begin position="63"/>
        <end position="70"/>
    </location>
    <ligand>
        <name>ATP</name>
        <dbReference type="ChEBI" id="CHEBI:30616"/>
    </ligand>
</feature>
<proteinExistence type="inferred from homology"/>
<comment type="function">
    <text evidence="1">Transfers the gamma-phosphate of ATP to the 4'-position of a tetraacyldisaccharide 1-phosphate intermediate (termed DS-1-P) to form tetraacyldisaccharide 1,4'-bis-phosphate (lipid IVA).</text>
</comment>
<comment type="catalytic activity">
    <reaction evidence="1">
        <text>a lipid A disaccharide + ATP = a lipid IVA + ADP + H(+)</text>
        <dbReference type="Rhea" id="RHEA:67840"/>
        <dbReference type="ChEBI" id="CHEBI:15378"/>
        <dbReference type="ChEBI" id="CHEBI:30616"/>
        <dbReference type="ChEBI" id="CHEBI:176343"/>
        <dbReference type="ChEBI" id="CHEBI:176425"/>
        <dbReference type="ChEBI" id="CHEBI:456216"/>
        <dbReference type="EC" id="2.7.1.130"/>
    </reaction>
</comment>
<comment type="pathway">
    <text evidence="1">Glycolipid biosynthesis; lipid IV(A) biosynthesis; lipid IV(A) from (3R)-3-hydroxytetradecanoyl-[acyl-carrier-protein] and UDP-N-acetyl-alpha-D-glucosamine: step 6/6.</text>
</comment>
<comment type="similarity">
    <text evidence="1">Belongs to the LpxK family.</text>
</comment>
<organism>
    <name type="scientific">Anaeromyxobacter sp. (strain K)</name>
    <dbReference type="NCBI Taxonomy" id="447217"/>
    <lineage>
        <taxon>Bacteria</taxon>
        <taxon>Pseudomonadati</taxon>
        <taxon>Myxococcota</taxon>
        <taxon>Myxococcia</taxon>
        <taxon>Myxococcales</taxon>
        <taxon>Cystobacterineae</taxon>
        <taxon>Anaeromyxobacteraceae</taxon>
        <taxon>Anaeromyxobacter</taxon>
    </lineage>
</organism>
<protein>
    <recommendedName>
        <fullName evidence="1">Tetraacyldisaccharide 4'-kinase</fullName>
        <ecNumber evidence="1">2.7.1.130</ecNumber>
    </recommendedName>
    <alternativeName>
        <fullName evidence="1">Lipid A 4'-kinase</fullName>
    </alternativeName>
</protein>
<gene>
    <name evidence="1" type="primary">lpxK</name>
    <name type="ordered locus">AnaeK_2699</name>
</gene>
<sequence>MSGLEAIWWRERPGPLGALAGAPLLLAEAPFRAAAALRGALYDRGVLPAVRAGAPVVSIGNLAVGGAGKTPAALAVAARLAGRGRRVAILSRGYGAARADARVASDGAGALLPAAEAGDEPALLARRLPGVAVLCGPRRAELARTAVEALGADALVLDDGFQHRALARDLDVVVLDASNPFGNGHLLPRGPNREPRTALRRAGLVWLSHADRAAPERLEALRRLARDATGRAPVESRHAPTALLDGALREAGSLEALRGRRVAALSGLARPAGFLRTLEALGAEVALARAFPDHHRFTGGELEAVLRDADAAGCAWVVTTEKDAVRLDAALAAAAADRLRVVRVDAELLRGADVLEAALDAALAAAPQPRPAPRAPVS</sequence>